<keyword id="KW-0067">ATP-binding</keyword>
<keyword id="KW-0413">Isomerase</keyword>
<keyword id="KW-0456">Lyase</keyword>
<keyword id="KW-0479">Metal-binding</keyword>
<keyword id="KW-0511">Multifunctional enzyme</keyword>
<keyword id="KW-0520">NAD</keyword>
<keyword id="KW-0521">NADP</keyword>
<keyword id="KW-0547">Nucleotide-binding</keyword>
<keyword id="KW-0630">Potassium</keyword>
<keyword id="KW-1185">Reference proteome</keyword>
<gene>
    <name type="primary">nnr</name>
    <name type="synonym">yjeF</name>
    <name type="ordered locus">b4167</name>
    <name type="ordered locus">JW4125</name>
</gene>
<protein>
    <recommendedName>
        <fullName>Bifunctional NAD(P)H-hydrate repair enzyme Nnr</fullName>
    </recommendedName>
    <alternativeName>
        <fullName>Nicotinamide nucleotide repair protein</fullName>
    </alternativeName>
    <domain>
        <recommendedName>
            <fullName>ADP-dependent (S)-NAD(P)H-hydrate dehydratase</fullName>
            <ecNumber>4.2.1.136</ecNumber>
        </recommendedName>
        <alternativeName>
            <fullName>ADP-dependent NAD(P)HX dehydratase</fullName>
        </alternativeName>
    </domain>
    <domain>
        <recommendedName>
            <fullName>NAD(P)H-hydrate epimerase</fullName>
            <ecNumber>5.1.99.6</ecNumber>
        </recommendedName>
        <alternativeName>
            <fullName>NAD(P)HX epimerase</fullName>
        </alternativeName>
    </domain>
</protein>
<evidence type="ECO:0000250" key="1"/>
<evidence type="ECO:0000269" key="2">
    <source>
    </source>
</evidence>
<evidence type="ECO:0000305" key="3"/>
<sequence length="515" mass="54650">MTDHTMKKNPVSIPHTVWYADDIRRGEREAADVLGLTLYELMLRAGEAAFQVCRSAYPDARHWLVLCGHGNNGGDGYVVARLAKAVGIEVTLLAQESDKPLPEEAALAREAWLNAGGEIHASNIVWPESVDLIVDALLGTGLRQAPRESISQLIDHANSHPAPIVAVDIPSGLLAETGATPGAVINADHTITFIALKPGLLTGKARDVTGQLHFDSLGLDSWLAGQETKIQRFSAEQLSHWLKPRRPTSHKGDHGRLVIIGGDHGTAGAIRMTGEAALRAGAGLVRVLTRSENIAPLLTARPELMVHELTMDSLTESLEWADVVVIGPGLGQQEWGKKALQKVENFRKPMLWDADALNLLAINPDKRHNRVITPHPGEAARLLGCSVAEIESDRLHCAKRLVQRYGGVAVLKGAGTVVAAHPDALGIIDAGNAGMASGGMGDVLSGIIGALLGQKLSPYDAACAGCVAHGAAADVLAARFGTRGMLATDLFSTLQRIVNPEVTDKNHDESSNSAP</sequence>
<feature type="chain" id="PRO_0000119043" description="Bifunctional NAD(P)H-hydrate repair enzyme Nnr">
    <location>
        <begin position="1"/>
        <end position="515"/>
    </location>
</feature>
<feature type="domain" description="YjeF N-terminal">
    <location>
        <begin position="23"/>
        <end position="225"/>
    </location>
</feature>
<feature type="domain" description="YjeF C-terminal">
    <location>
        <begin position="234"/>
        <end position="501"/>
    </location>
</feature>
<feature type="region of interest" description="NAD(P)H-hydrate epimerase" evidence="1">
    <location>
        <begin position="1"/>
        <end position="227"/>
    </location>
</feature>
<feature type="region of interest" description="NADPHX 1; for epimerase activity" evidence="1">
    <location>
        <begin position="71"/>
        <end position="75"/>
    </location>
</feature>
<feature type="region of interest" description="NADPHX 1; for epimerase activity" evidence="1">
    <location>
        <begin position="139"/>
        <end position="145"/>
    </location>
</feature>
<feature type="region of interest" description="ADP-dependent (S)-NAD(P)H-hydrate dehydratase" evidence="1">
    <location>
        <begin position="235"/>
        <end position="515"/>
    </location>
</feature>
<feature type="region of interest" description="NADPHX 2; for dehydratase activity" evidence="1">
    <location>
        <begin position="375"/>
        <end position="381"/>
    </location>
</feature>
<feature type="binding site" evidence="1">
    <location>
        <position position="72"/>
    </location>
    <ligand>
        <name>K(+)</name>
        <dbReference type="ChEBI" id="CHEBI:29103"/>
    </ligand>
</feature>
<feature type="binding site" evidence="1">
    <location>
        <position position="135"/>
    </location>
    <ligand>
        <name>K(+)</name>
        <dbReference type="ChEBI" id="CHEBI:29103"/>
    </ligand>
</feature>
<feature type="binding site" evidence="1">
    <location>
        <position position="168"/>
    </location>
    <ligand>
        <name>(6S)-NADPHX</name>
        <dbReference type="ChEBI" id="CHEBI:64076"/>
        <label>1</label>
        <note>for epimerase activity</note>
    </ligand>
</feature>
<feature type="binding site" evidence="1">
    <location>
        <position position="171"/>
    </location>
    <ligand>
        <name>K(+)</name>
        <dbReference type="ChEBI" id="CHEBI:29103"/>
    </ligand>
</feature>
<feature type="binding site" evidence="1">
    <location>
        <position position="329"/>
    </location>
    <ligand>
        <name>(6S)-NADPHX</name>
        <dbReference type="ChEBI" id="CHEBI:64076"/>
        <label>2</label>
        <note>for dehydratase activity</note>
    </ligand>
</feature>
<feature type="binding site" evidence="1">
    <location>
        <begin position="412"/>
        <end position="416"/>
    </location>
    <ligand>
        <name>ADP</name>
        <dbReference type="ChEBI" id="CHEBI:456216"/>
    </ligand>
</feature>
<feature type="binding site" evidence="1">
    <location>
        <begin position="432"/>
        <end position="441"/>
    </location>
    <ligand>
        <name>ADP</name>
        <dbReference type="ChEBI" id="CHEBI:456216"/>
    </ligand>
</feature>
<feature type="binding site" evidence="1">
    <location>
        <position position="442"/>
    </location>
    <ligand>
        <name>(6S)-NADPHX</name>
        <dbReference type="ChEBI" id="CHEBI:64076"/>
        <label>2</label>
        <note>for dehydratase activity</note>
    </ligand>
</feature>
<reference key="1">
    <citation type="journal article" date="1995" name="Nucleic Acids Res.">
        <title>Analysis of the Escherichia coli genome VI: DNA sequence of the region from 92.8 through 100 minutes.</title>
        <authorList>
            <person name="Burland V.D."/>
            <person name="Plunkett G. III"/>
            <person name="Sofia H.J."/>
            <person name="Daniels D.L."/>
            <person name="Blattner F.R."/>
        </authorList>
    </citation>
    <scope>NUCLEOTIDE SEQUENCE [LARGE SCALE GENOMIC DNA]</scope>
    <source>
        <strain>K12 / MG1655 / ATCC 47076</strain>
    </source>
</reference>
<reference key="2">
    <citation type="journal article" date="1997" name="Science">
        <title>The complete genome sequence of Escherichia coli K-12.</title>
        <authorList>
            <person name="Blattner F.R."/>
            <person name="Plunkett G. III"/>
            <person name="Bloch C.A."/>
            <person name="Perna N.T."/>
            <person name="Burland V."/>
            <person name="Riley M."/>
            <person name="Collado-Vides J."/>
            <person name="Glasner J.D."/>
            <person name="Rode C.K."/>
            <person name="Mayhew G.F."/>
            <person name="Gregor J."/>
            <person name="Davis N.W."/>
            <person name="Kirkpatrick H.A."/>
            <person name="Goeden M.A."/>
            <person name="Rose D.J."/>
            <person name="Mau B."/>
            <person name="Shao Y."/>
        </authorList>
    </citation>
    <scope>NUCLEOTIDE SEQUENCE [LARGE SCALE GENOMIC DNA]</scope>
    <source>
        <strain>K12 / MG1655 / ATCC 47076</strain>
    </source>
</reference>
<reference key="3">
    <citation type="journal article" date="2006" name="Mol. Syst. Biol.">
        <title>Highly accurate genome sequences of Escherichia coli K-12 strains MG1655 and W3110.</title>
        <authorList>
            <person name="Hayashi K."/>
            <person name="Morooka N."/>
            <person name="Yamamoto Y."/>
            <person name="Fujita K."/>
            <person name="Isono K."/>
            <person name="Choi S."/>
            <person name="Ohtsubo E."/>
            <person name="Baba T."/>
            <person name="Wanner B.L."/>
            <person name="Mori H."/>
            <person name="Horiuchi T."/>
        </authorList>
    </citation>
    <scope>NUCLEOTIDE SEQUENCE [LARGE SCALE GENOMIC DNA]</scope>
    <source>
        <strain>K12 / W3110 / ATCC 27325 / DSM 5911</strain>
    </source>
</reference>
<reference key="4">
    <citation type="journal article" date="1994" name="Mol. Microbiol.">
        <title>The mutL repair gene of Escherichia coli K-12 forms a superoperon with a gene encoding a new cell-wall amidase.</title>
        <authorList>
            <person name="Tsui H.-C.T."/>
            <person name="Zhao G."/>
            <person name="Feng G."/>
            <person name="Leung H.-C.E."/>
            <person name="Winkler M.E."/>
        </authorList>
    </citation>
    <scope>NUCLEOTIDE SEQUENCE [GENOMIC DNA] OF 139-515</scope>
    <source>
        <strain>K12</strain>
    </source>
</reference>
<reference key="5">
    <citation type="journal article" date="2011" name="J. Biol. Chem.">
        <title>Extremely conserved ATP- or ADP-dependent enzymatic system for nicotinamide nucleotide repair.</title>
        <authorList>
            <person name="Marbaix A.Y."/>
            <person name="Noel G."/>
            <person name="Detroux A.M."/>
            <person name="Vertommen D."/>
            <person name="Van Schaftingen E."/>
            <person name="Linster C.L."/>
        </authorList>
    </citation>
    <scope>FUNCTION</scope>
    <scope>CATALYTIC ACTIVITY</scope>
    <scope>BIOPHYSICOCHEMICAL PROPERTIES</scope>
</reference>
<proteinExistence type="evidence at protein level"/>
<dbReference type="EC" id="4.2.1.136"/>
<dbReference type="EC" id="5.1.99.6"/>
<dbReference type="EMBL" id="U14003">
    <property type="protein sequence ID" value="AAA97063.1"/>
    <property type="molecule type" value="Genomic_DNA"/>
</dbReference>
<dbReference type="EMBL" id="U00096">
    <property type="protein sequence ID" value="AAC77124.1"/>
    <property type="molecule type" value="Genomic_DNA"/>
</dbReference>
<dbReference type="EMBL" id="AP009048">
    <property type="protein sequence ID" value="BAE78168.1"/>
    <property type="molecule type" value="Genomic_DNA"/>
</dbReference>
<dbReference type="EMBL" id="L19346">
    <property type="protein sequence ID" value="AAA20095.1"/>
    <property type="molecule type" value="Unassigned_DNA"/>
</dbReference>
<dbReference type="PIR" id="S56392">
    <property type="entry name" value="S56392"/>
</dbReference>
<dbReference type="RefSeq" id="NP_418588.1">
    <property type="nucleotide sequence ID" value="NC_000913.3"/>
</dbReference>
<dbReference type="RefSeq" id="WP_001295189.1">
    <property type="nucleotide sequence ID" value="NZ_LN832404.1"/>
</dbReference>
<dbReference type="SMR" id="P31806"/>
<dbReference type="BioGRID" id="4262704">
    <property type="interactions" value="129"/>
</dbReference>
<dbReference type="BioGRID" id="852977">
    <property type="interactions" value="1"/>
</dbReference>
<dbReference type="DIP" id="DIP-12572N"/>
<dbReference type="FunCoup" id="P31806">
    <property type="interactions" value="382"/>
</dbReference>
<dbReference type="IntAct" id="P31806">
    <property type="interactions" value="9"/>
</dbReference>
<dbReference type="STRING" id="511145.b4167"/>
<dbReference type="jPOST" id="P31806"/>
<dbReference type="PaxDb" id="511145-b4167"/>
<dbReference type="EnsemblBacteria" id="AAC77124">
    <property type="protein sequence ID" value="AAC77124"/>
    <property type="gene ID" value="b4167"/>
</dbReference>
<dbReference type="GeneID" id="948685"/>
<dbReference type="KEGG" id="ecj:JW4125"/>
<dbReference type="KEGG" id="eco:b4167"/>
<dbReference type="PATRIC" id="fig|511145.12.peg.4298"/>
<dbReference type="EchoBASE" id="EB1708"/>
<dbReference type="eggNOG" id="COG0062">
    <property type="taxonomic scope" value="Bacteria"/>
</dbReference>
<dbReference type="eggNOG" id="COG0063">
    <property type="taxonomic scope" value="Bacteria"/>
</dbReference>
<dbReference type="HOGENOM" id="CLU_024853_4_3_6"/>
<dbReference type="InParanoid" id="P31806"/>
<dbReference type="OMA" id="NAHKGDY"/>
<dbReference type="OrthoDB" id="9806925at2"/>
<dbReference type="PhylomeDB" id="P31806"/>
<dbReference type="BioCyc" id="EcoCyc:EG11758-MONOMER"/>
<dbReference type="BioCyc" id="MetaCyc:EG11758-MONOMER"/>
<dbReference type="BRENDA" id="5.1.99.6">
    <property type="organism ID" value="2026"/>
</dbReference>
<dbReference type="PRO" id="PR:P31806"/>
<dbReference type="Proteomes" id="UP000000625">
    <property type="component" value="Chromosome"/>
</dbReference>
<dbReference type="GO" id="GO:0052855">
    <property type="term" value="F:ADP-dependent NAD(P)H-hydrate dehydratase activity"/>
    <property type="evidence" value="ECO:0000314"/>
    <property type="project" value="EcoCyc"/>
</dbReference>
<dbReference type="GO" id="GO:0005524">
    <property type="term" value="F:ATP binding"/>
    <property type="evidence" value="ECO:0007669"/>
    <property type="project" value="UniProtKB-KW"/>
</dbReference>
<dbReference type="GO" id="GO:0046872">
    <property type="term" value="F:metal ion binding"/>
    <property type="evidence" value="ECO:0007669"/>
    <property type="project" value="UniProtKB-KW"/>
</dbReference>
<dbReference type="GO" id="GO:0052856">
    <property type="term" value="F:NAD(P)HX epimerase activity"/>
    <property type="evidence" value="ECO:0000314"/>
    <property type="project" value="EcoCyc"/>
</dbReference>
<dbReference type="GO" id="GO:0110051">
    <property type="term" value="P:metabolite repair"/>
    <property type="evidence" value="ECO:0000314"/>
    <property type="project" value="EcoCyc"/>
</dbReference>
<dbReference type="GO" id="GO:0046496">
    <property type="term" value="P:nicotinamide nucleotide metabolic process"/>
    <property type="evidence" value="ECO:0007669"/>
    <property type="project" value="UniProtKB-UniRule"/>
</dbReference>
<dbReference type="CDD" id="cd01171">
    <property type="entry name" value="YXKO-related"/>
    <property type="match status" value="1"/>
</dbReference>
<dbReference type="FunFam" id="3.40.1190.20:FF:000017">
    <property type="entry name" value="Multifunctional fusion protein"/>
    <property type="match status" value="1"/>
</dbReference>
<dbReference type="FunFam" id="3.40.50.10260:FF:000003">
    <property type="entry name" value="Multifunctional fusion protein"/>
    <property type="match status" value="1"/>
</dbReference>
<dbReference type="Gene3D" id="3.40.1190.20">
    <property type="match status" value="1"/>
</dbReference>
<dbReference type="Gene3D" id="3.40.50.10260">
    <property type="entry name" value="YjeF N-terminal domain"/>
    <property type="match status" value="1"/>
</dbReference>
<dbReference type="HAMAP" id="MF_01965">
    <property type="entry name" value="NADHX_dehydratase"/>
    <property type="match status" value="1"/>
</dbReference>
<dbReference type="HAMAP" id="MF_01966">
    <property type="entry name" value="NADHX_epimerase"/>
    <property type="match status" value="1"/>
</dbReference>
<dbReference type="InterPro" id="IPR017953">
    <property type="entry name" value="Carbohydrate_kinase_pred_CS"/>
</dbReference>
<dbReference type="InterPro" id="IPR000631">
    <property type="entry name" value="CARKD"/>
</dbReference>
<dbReference type="InterPro" id="IPR030677">
    <property type="entry name" value="Nnr"/>
</dbReference>
<dbReference type="InterPro" id="IPR029056">
    <property type="entry name" value="Ribokinase-like"/>
</dbReference>
<dbReference type="InterPro" id="IPR004443">
    <property type="entry name" value="YjeF_N_dom"/>
</dbReference>
<dbReference type="InterPro" id="IPR036652">
    <property type="entry name" value="YjeF_N_dom_sf"/>
</dbReference>
<dbReference type="NCBIfam" id="NF007856">
    <property type="entry name" value="PRK10565.1"/>
    <property type="match status" value="1"/>
</dbReference>
<dbReference type="NCBIfam" id="TIGR00196">
    <property type="entry name" value="yjeF_cterm"/>
    <property type="match status" value="1"/>
</dbReference>
<dbReference type="NCBIfam" id="TIGR00197">
    <property type="entry name" value="yjeF_nterm"/>
    <property type="match status" value="1"/>
</dbReference>
<dbReference type="PANTHER" id="PTHR12592:SF0">
    <property type="entry name" value="ATP-DEPENDENT (S)-NAD(P)H-HYDRATE DEHYDRATASE"/>
    <property type="match status" value="1"/>
</dbReference>
<dbReference type="PANTHER" id="PTHR12592">
    <property type="entry name" value="ATP-DEPENDENT (S)-NAD(P)H-HYDRATE DEHYDRATASE FAMILY MEMBER"/>
    <property type="match status" value="1"/>
</dbReference>
<dbReference type="Pfam" id="PF01256">
    <property type="entry name" value="Carb_kinase"/>
    <property type="match status" value="1"/>
</dbReference>
<dbReference type="Pfam" id="PF03853">
    <property type="entry name" value="YjeF_N"/>
    <property type="match status" value="1"/>
</dbReference>
<dbReference type="PIRSF" id="PIRSF017184">
    <property type="entry name" value="Nnr"/>
    <property type="match status" value="1"/>
</dbReference>
<dbReference type="SUPFAM" id="SSF53613">
    <property type="entry name" value="Ribokinase-like"/>
    <property type="match status" value="1"/>
</dbReference>
<dbReference type="SUPFAM" id="SSF64153">
    <property type="entry name" value="YjeF N-terminal domain-like"/>
    <property type="match status" value="1"/>
</dbReference>
<dbReference type="PROSITE" id="PS01049">
    <property type="entry name" value="YJEF_C_1"/>
    <property type="match status" value="1"/>
</dbReference>
<dbReference type="PROSITE" id="PS01050">
    <property type="entry name" value="YJEF_C_2"/>
    <property type="match status" value="1"/>
</dbReference>
<dbReference type="PROSITE" id="PS51383">
    <property type="entry name" value="YJEF_C_3"/>
    <property type="match status" value="1"/>
</dbReference>
<dbReference type="PROSITE" id="PS51385">
    <property type="entry name" value="YJEF_N"/>
    <property type="match status" value="1"/>
</dbReference>
<comment type="function">
    <text evidence="2">Bifunctional enzyme that catalyzes the epimerization of the S- and R-forms of NAD(P)HX and the dehydration of the S-form of NAD(P)HX at the expense of ADP, which is converted to AMP. This allows the repair of both epimers of NAD(P)HX, a damaged form of NAD(P)H that is a result of enzymatic or heat-dependent hydration.</text>
</comment>
<comment type="catalytic activity">
    <reaction evidence="2">
        <text>(6S)-NADHX + ADP = AMP + phosphate + NADH + H(+)</text>
        <dbReference type="Rhea" id="RHEA:32223"/>
        <dbReference type="ChEBI" id="CHEBI:15378"/>
        <dbReference type="ChEBI" id="CHEBI:43474"/>
        <dbReference type="ChEBI" id="CHEBI:57945"/>
        <dbReference type="ChEBI" id="CHEBI:64074"/>
        <dbReference type="ChEBI" id="CHEBI:456215"/>
        <dbReference type="ChEBI" id="CHEBI:456216"/>
        <dbReference type="EC" id="4.2.1.136"/>
    </reaction>
</comment>
<comment type="catalytic activity">
    <reaction evidence="2">
        <text>(6S)-NADPHX + ADP = AMP + phosphate + NADPH + H(+)</text>
        <dbReference type="Rhea" id="RHEA:32235"/>
        <dbReference type="ChEBI" id="CHEBI:15378"/>
        <dbReference type="ChEBI" id="CHEBI:43474"/>
        <dbReference type="ChEBI" id="CHEBI:57783"/>
        <dbReference type="ChEBI" id="CHEBI:64076"/>
        <dbReference type="ChEBI" id="CHEBI:456215"/>
        <dbReference type="ChEBI" id="CHEBI:456216"/>
        <dbReference type="EC" id="4.2.1.136"/>
    </reaction>
</comment>
<comment type="catalytic activity">
    <reaction evidence="2">
        <text>(6R)-NADHX = (6S)-NADHX</text>
        <dbReference type="Rhea" id="RHEA:32215"/>
        <dbReference type="ChEBI" id="CHEBI:64074"/>
        <dbReference type="ChEBI" id="CHEBI:64075"/>
        <dbReference type="EC" id="5.1.99.6"/>
    </reaction>
</comment>
<comment type="catalytic activity">
    <reaction evidence="2">
        <text>(6R)-NADPHX = (6S)-NADPHX</text>
        <dbReference type="Rhea" id="RHEA:32227"/>
        <dbReference type="ChEBI" id="CHEBI:64076"/>
        <dbReference type="ChEBI" id="CHEBI:64077"/>
        <dbReference type="EC" id="5.1.99.6"/>
    </reaction>
</comment>
<comment type="cofactor">
    <cofactor evidence="1">
        <name>K(+)</name>
        <dbReference type="ChEBI" id="CHEBI:29103"/>
    </cofactor>
    <text evidence="1">Binds 1 potassium ion per subunit.</text>
</comment>
<comment type="biophysicochemical properties">
    <kinetics>
        <KM evidence="2">1.2 uM for (S)-NADHX</KM>
        <KM evidence="2">0.86 uM for (S)-NADPHX</KM>
        <KM evidence="2">3.6 uM for ADP</KM>
        <Vmax evidence="2">0.62 umol/min/mg enzyme toward (S)-NADHX</Vmax>
        <Vmax evidence="2">0.88 umol/min/mg enzyme toward (S)-NADPHX</Vmax>
        <Vmax evidence="2">0.6 umol/min/mg enzyme toward ADP</Vmax>
    </kinetics>
</comment>
<comment type="interaction">
    <interactant intactId="EBI-554188">
        <id>P31806</id>
    </interactant>
    <interactant intactId="EBI-552513">
        <id>P15005</id>
        <label>mcrB</label>
    </interactant>
    <organismsDiffer>false</organismsDiffer>
    <experiments>3</experiments>
</comment>
<comment type="interaction">
    <interactant intactId="EBI-554188">
        <id>P31806</id>
    </interactant>
    <interactant intactId="EBI-562712">
        <id>P63177</id>
        <label>rlmB</label>
    </interactant>
    <organismsDiffer>false</organismsDiffer>
    <experiments>3</experiments>
</comment>
<comment type="similarity">
    <text evidence="3">In the N-terminal section; belongs to the NnrE/AIBP family.</text>
</comment>
<comment type="similarity">
    <text evidence="3">In the C-terminal section; belongs to the NnrD/CARKD family.</text>
</comment>
<name>NNR_ECOLI</name>
<organism>
    <name type="scientific">Escherichia coli (strain K12)</name>
    <dbReference type="NCBI Taxonomy" id="83333"/>
    <lineage>
        <taxon>Bacteria</taxon>
        <taxon>Pseudomonadati</taxon>
        <taxon>Pseudomonadota</taxon>
        <taxon>Gammaproteobacteria</taxon>
        <taxon>Enterobacterales</taxon>
        <taxon>Enterobacteriaceae</taxon>
        <taxon>Escherichia</taxon>
    </lineage>
</organism>
<accession>P31806</accession>
<accession>Q2M6D8</accession>